<organism>
    <name type="scientific">Methanosarcina barkeri (strain Fusaro / DSM 804)</name>
    <dbReference type="NCBI Taxonomy" id="269797"/>
    <lineage>
        <taxon>Archaea</taxon>
        <taxon>Methanobacteriati</taxon>
        <taxon>Methanobacteriota</taxon>
        <taxon>Stenosarchaea group</taxon>
        <taxon>Methanomicrobia</taxon>
        <taxon>Methanosarcinales</taxon>
        <taxon>Methanosarcinaceae</taxon>
        <taxon>Methanosarcina</taxon>
    </lineage>
</organism>
<feature type="chain" id="PRO_0000140880" description="Methenyltetrahydromethanopterin cyclohydrolase">
    <location>
        <begin position="1"/>
        <end position="321"/>
    </location>
</feature>
<keyword id="KW-0963">Cytoplasm</keyword>
<keyword id="KW-0378">Hydrolase</keyword>
<keyword id="KW-0484">Methanogenesis</keyword>
<keyword id="KW-0554">One-carbon metabolism</keyword>
<proteinExistence type="inferred from homology"/>
<name>MCH_METBF</name>
<protein>
    <recommendedName>
        <fullName>Methenyltetrahydromethanopterin cyclohydrolase</fullName>
        <ecNumber>3.5.4.27</ecNumber>
    </recommendedName>
    <alternativeName>
        <fullName>Methenyl-H4MPT cyclohydrolase</fullName>
    </alternativeName>
</protein>
<accession>P94919</accession>
<accession>Q46AD4</accession>
<dbReference type="EC" id="3.5.4.27"/>
<dbReference type="EMBL" id="Y08843">
    <property type="protein sequence ID" value="CAA70069.1"/>
    <property type="molecule type" value="Genomic_DNA"/>
</dbReference>
<dbReference type="EMBL" id="CP000099">
    <property type="protein sequence ID" value="AAZ71158.1"/>
    <property type="molecule type" value="Genomic_DNA"/>
</dbReference>
<dbReference type="SMR" id="P94919"/>
<dbReference type="STRING" id="269797.Mbar_A2233"/>
<dbReference type="PaxDb" id="269797-Mbar_A2233"/>
<dbReference type="GeneID" id="24824073"/>
<dbReference type="KEGG" id="mba:Mbar_A2233"/>
<dbReference type="eggNOG" id="arCOG02675">
    <property type="taxonomic scope" value="Archaea"/>
</dbReference>
<dbReference type="HOGENOM" id="CLU_876031_0_0_2"/>
<dbReference type="OrthoDB" id="105468at2157"/>
<dbReference type="UniPathway" id="UPA00640">
    <property type="reaction ID" value="UER00694"/>
</dbReference>
<dbReference type="GO" id="GO:0005737">
    <property type="term" value="C:cytoplasm"/>
    <property type="evidence" value="ECO:0007669"/>
    <property type="project" value="UniProtKB-SubCell"/>
</dbReference>
<dbReference type="GO" id="GO:0018759">
    <property type="term" value="F:methenyltetrahydromethanopterin cyclohydrolase activity"/>
    <property type="evidence" value="ECO:0007669"/>
    <property type="project" value="UniProtKB-UniRule"/>
</dbReference>
<dbReference type="GO" id="GO:0019386">
    <property type="term" value="P:methanogenesis, from carbon dioxide"/>
    <property type="evidence" value="ECO:0007669"/>
    <property type="project" value="UniProtKB-UniRule"/>
</dbReference>
<dbReference type="GO" id="GO:0006730">
    <property type="term" value="P:one-carbon metabolic process"/>
    <property type="evidence" value="ECO:0007669"/>
    <property type="project" value="UniProtKB-UniRule"/>
</dbReference>
<dbReference type="CDD" id="cd00545">
    <property type="entry name" value="MCH"/>
    <property type="match status" value="1"/>
</dbReference>
<dbReference type="Gene3D" id="3.10.340.11">
    <property type="entry name" value="Methenyltetrahydromethanopterin Cyclohydrolase, Chain A, domain 1"/>
    <property type="match status" value="1"/>
</dbReference>
<dbReference type="Gene3D" id="3.30.1030.10">
    <property type="entry name" value="Methenyltetrahydromethanopterin Cyclohydrolase, Chain A, domain 2"/>
    <property type="match status" value="1"/>
</dbReference>
<dbReference type="HAMAP" id="MF_00486">
    <property type="entry name" value="McH"/>
    <property type="match status" value="1"/>
</dbReference>
<dbReference type="InterPro" id="IPR003209">
    <property type="entry name" value="METHMP_CycHdrlase"/>
</dbReference>
<dbReference type="NCBIfam" id="TIGR03120">
    <property type="entry name" value="one_C_mch"/>
    <property type="match status" value="1"/>
</dbReference>
<dbReference type="Pfam" id="PF02289">
    <property type="entry name" value="MCH"/>
    <property type="match status" value="1"/>
</dbReference>
<dbReference type="SUPFAM" id="SSF56199">
    <property type="entry name" value="Methenyltetrahydromethanopterin cyclohydrolase"/>
    <property type="match status" value="1"/>
</dbReference>
<comment type="function">
    <text evidence="1">Catalyzes the reversible interconversion of 5-formyl-H(4)MPT to methenyl-H(4)MPT(+).</text>
</comment>
<comment type="catalytic activity">
    <reaction>
        <text>5,10-methenyl-5,6,7,8-tetrahydromethanopterin + H2O = N(5)-formyl-5,6,7,8-tetrahydromethanopterin + H(+)</text>
        <dbReference type="Rhea" id="RHEA:19053"/>
        <dbReference type="ChEBI" id="CHEBI:15377"/>
        <dbReference type="ChEBI" id="CHEBI:15378"/>
        <dbReference type="ChEBI" id="CHEBI:58018"/>
        <dbReference type="ChEBI" id="CHEBI:58337"/>
        <dbReference type="EC" id="3.5.4.27"/>
    </reaction>
</comment>
<comment type="pathway">
    <text>One-carbon metabolism; methanogenesis from CO(2); 5,10-methenyl-5,6,7,8-tetrahydromethanopterin from CO(2): step 3/3.</text>
</comment>
<comment type="subcellular location">
    <subcellularLocation>
        <location evidence="1">Cytoplasm</location>
    </subcellularLocation>
</comment>
<comment type="similarity">
    <text evidence="2">Belongs to the MCH family.</text>
</comment>
<evidence type="ECO:0000250" key="1"/>
<evidence type="ECO:0000305" key="2"/>
<sequence>MISVNEMGSNVIEEMLDWSEDLKTEVLKLNNGATVIDCGVKAEGGYEAGMYLARLCLADLADLKYTTFDLNGLKWPAIQVATDNPVIACMASQYAGWRISVGNYFGMGSGPARALGLKPKELYEEIGYEDDFEAAVLVMESDKLPDEKVVEFIAKHCSVDPENVMIAVAPTASIAGSVQISARVVETGIHKFESVGFDINCIKSGYGVAPIAPVVGKDVQCMGSTNDCVIYCGETNYTVRFDGELAELEEFVKKVPSTTSQDFGKPFYQTFKEANFDFFKVDAGMFAPARLTVNDLNSTKTISSGGLYPEILLQSFGIRNV</sequence>
<gene>
    <name type="primary">mch</name>
    <name type="ordered locus">Mbar_A2233</name>
</gene>
<reference key="1">
    <citation type="submission" date="1996-10" db="EMBL/GenBank/DDBJ databases">
        <authorList>
            <person name="Vaupel M."/>
        </authorList>
    </citation>
    <scope>NUCLEOTIDE SEQUENCE [GENOMIC DNA]</scope>
</reference>
<reference key="2">
    <citation type="journal article" date="2006" name="J. Bacteriol.">
        <title>The Methanosarcina barkeri genome: comparative analysis with Methanosarcina acetivorans and Methanosarcina mazei reveals extensive rearrangement within methanosarcinal genomes.</title>
        <authorList>
            <person name="Maeder D.L."/>
            <person name="Anderson I."/>
            <person name="Brettin T.S."/>
            <person name="Bruce D.C."/>
            <person name="Gilna P."/>
            <person name="Han C.S."/>
            <person name="Lapidus A."/>
            <person name="Metcalf W.W."/>
            <person name="Saunders E."/>
            <person name="Tapia R."/>
            <person name="Sowers K.R."/>
        </authorList>
    </citation>
    <scope>NUCLEOTIDE SEQUENCE [LARGE SCALE GENOMIC DNA]</scope>
    <source>
        <strain>Fusaro / DSM 804</strain>
    </source>
</reference>